<evidence type="ECO:0000250" key="1"/>
<evidence type="ECO:0000250" key="2">
    <source>
        <dbReference type="UniProtKB" id="P21853"/>
    </source>
</evidence>
<evidence type="ECO:0000255" key="3"/>
<evidence type="ECO:0000255" key="4">
    <source>
        <dbReference type="PROSITE-ProRule" id="PRU00648"/>
    </source>
</evidence>
<evidence type="ECO:0000256" key="5">
    <source>
        <dbReference type="SAM" id="MobiDB-lite"/>
    </source>
</evidence>
<evidence type="ECO:0000305" key="6"/>
<name>MBHS_ECOL6</name>
<organism>
    <name type="scientific">Escherichia coli O6:H1 (strain CFT073 / ATCC 700928 / UPEC)</name>
    <dbReference type="NCBI Taxonomy" id="199310"/>
    <lineage>
        <taxon>Bacteria</taxon>
        <taxon>Pseudomonadati</taxon>
        <taxon>Pseudomonadota</taxon>
        <taxon>Gammaproteobacteria</taxon>
        <taxon>Enterobacterales</taxon>
        <taxon>Enterobacteriaceae</taxon>
        <taxon>Escherichia</taxon>
    </lineage>
</organism>
<feature type="signal peptide" description="Tat-type signal" evidence="4">
    <location>
        <begin position="1"/>
        <end position="45"/>
    </location>
</feature>
<feature type="chain" id="PRO_0000013428" description="Hydrogenase-1 small chain">
    <location>
        <begin position="46"/>
        <end position="372"/>
    </location>
</feature>
<feature type="topological domain" description="Periplasmic" evidence="3">
    <location>
        <begin position="46"/>
        <end position="326"/>
    </location>
</feature>
<feature type="transmembrane region" description="Helical" evidence="3">
    <location>
        <begin position="327"/>
        <end position="347"/>
    </location>
</feature>
<feature type="topological domain" description="Cytoplasmic" evidence="3">
    <location>
        <begin position="348"/>
        <end position="372"/>
    </location>
</feature>
<feature type="region of interest" description="Disordered" evidence="5">
    <location>
        <begin position="347"/>
        <end position="372"/>
    </location>
</feature>
<feature type="compositionally biased region" description="Basic and acidic residues" evidence="5">
    <location>
        <begin position="360"/>
        <end position="372"/>
    </location>
</feature>
<feature type="binding site" evidence="2">
    <location>
        <position position="62"/>
    </location>
    <ligand>
        <name>[4Fe-4S] cluster</name>
        <dbReference type="ChEBI" id="CHEBI:49883"/>
        <label>1</label>
    </ligand>
</feature>
<feature type="binding site" evidence="2">
    <location>
        <position position="65"/>
    </location>
    <ligand>
        <name>[4Fe-4S] cluster</name>
        <dbReference type="ChEBI" id="CHEBI:49883"/>
        <label>1</label>
    </ligand>
</feature>
<feature type="binding site" evidence="2">
    <location>
        <position position="160"/>
    </location>
    <ligand>
        <name>[4Fe-4S] cluster</name>
        <dbReference type="ChEBI" id="CHEBI:49883"/>
        <label>1</label>
    </ligand>
</feature>
<feature type="binding site" evidence="2">
    <location>
        <position position="194"/>
    </location>
    <ligand>
        <name>[4Fe-4S] cluster</name>
        <dbReference type="ChEBI" id="CHEBI:49883"/>
        <label>1</label>
    </ligand>
</feature>
<feature type="binding site" evidence="2">
    <location>
        <position position="232"/>
    </location>
    <ligand>
        <name>[4Fe-4S] cluster</name>
        <dbReference type="ChEBI" id="CHEBI:49883"/>
        <label>2</label>
    </ligand>
</feature>
<feature type="binding site" evidence="2">
    <location>
        <position position="235"/>
    </location>
    <ligand>
        <name>[4Fe-4S] cluster</name>
        <dbReference type="ChEBI" id="CHEBI:49883"/>
        <label>2</label>
    </ligand>
</feature>
<feature type="binding site" evidence="2">
    <location>
        <position position="260"/>
    </location>
    <ligand>
        <name>[4Fe-4S] cluster</name>
        <dbReference type="ChEBI" id="CHEBI:49883"/>
        <label>2</label>
    </ligand>
</feature>
<feature type="binding site" evidence="2">
    <location>
        <position position="266"/>
    </location>
    <ligand>
        <name>[4Fe-4S] cluster</name>
        <dbReference type="ChEBI" id="CHEBI:49883"/>
        <label>2</label>
    </ligand>
</feature>
<feature type="binding site" evidence="2">
    <location>
        <position position="275"/>
    </location>
    <ligand>
        <name>[3Fe-4S] cluster</name>
        <dbReference type="ChEBI" id="CHEBI:21137"/>
    </ligand>
</feature>
<feature type="binding site" evidence="2">
    <location>
        <position position="294"/>
    </location>
    <ligand>
        <name>[3Fe-4S] cluster</name>
        <dbReference type="ChEBI" id="CHEBI:21137"/>
    </ligand>
</feature>
<feature type="binding site" evidence="2">
    <location>
        <position position="297"/>
    </location>
    <ligand>
        <name>[3Fe-4S] cluster</name>
        <dbReference type="ChEBI" id="CHEBI:21137"/>
    </ligand>
</feature>
<comment type="function">
    <text>This is one of three E.coli hydrogenases synthesized in response to different physiological conditions. HYD1 is believed to have a role in hydrogen cycling during fermentative growth.</text>
</comment>
<comment type="catalytic activity">
    <reaction>
        <text>H2 + A = AH2</text>
        <dbReference type="Rhea" id="RHEA:12116"/>
        <dbReference type="ChEBI" id="CHEBI:13193"/>
        <dbReference type="ChEBI" id="CHEBI:17499"/>
        <dbReference type="ChEBI" id="CHEBI:18276"/>
        <dbReference type="EC" id="1.12.99.6"/>
    </reaction>
</comment>
<comment type="cofactor">
    <cofactor evidence="2">
        <name>[4Fe-4S] cluster</name>
        <dbReference type="ChEBI" id="CHEBI:49883"/>
    </cofactor>
    <text evidence="2">Binds 2 [4Fe-4S] clusters.</text>
</comment>
<comment type="cofactor">
    <cofactor evidence="2">
        <name>[3Fe-4S] cluster</name>
        <dbReference type="ChEBI" id="CHEBI:21137"/>
    </cofactor>
    <text evidence="2">Binds 1 [3Fe-4S] cluster.</text>
</comment>
<comment type="subunit">
    <text>Heterodimer of a large and a small subunit.</text>
</comment>
<comment type="subcellular location">
    <subcellularLocation>
        <location evidence="1">Cell inner membrane</location>
        <topology evidence="1">Single-pass type I membrane protein</topology>
        <orientation evidence="1">Periplasmic side</orientation>
    </subcellularLocation>
</comment>
<comment type="PTM">
    <text>Predicted to be exported by the Tat system. The position of the signal peptide cleavage has not been experimentally proven.</text>
</comment>
<comment type="similarity">
    <text evidence="6">Belongs to the [NiFe]/[NiFeSe] hydrogenase small subunit family.</text>
</comment>
<comment type="sequence caution" evidence="6">
    <conflict type="erroneous initiation">
        <sequence resource="EMBL-CDS" id="AAN79581"/>
    </conflict>
</comment>
<dbReference type="EC" id="1.12.99.6"/>
<dbReference type="EMBL" id="AE014075">
    <property type="protein sequence ID" value="AAN79581.1"/>
    <property type="status" value="ALT_INIT"/>
    <property type="molecule type" value="Genomic_DNA"/>
</dbReference>
<dbReference type="RefSeq" id="WP_001058323.1">
    <property type="nucleotide sequence ID" value="NZ_CP051263.1"/>
</dbReference>
<dbReference type="SMR" id="P69740"/>
<dbReference type="STRING" id="199310.c1113"/>
<dbReference type="KEGG" id="ecc:c1113"/>
<dbReference type="eggNOG" id="COG1740">
    <property type="taxonomic scope" value="Bacteria"/>
</dbReference>
<dbReference type="HOGENOM" id="CLU_046107_0_0_6"/>
<dbReference type="Proteomes" id="UP000001410">
    <property type="component" value="Chromosome"/>
</dbReference>
<dbReference type="GO" id="GO:0044569">
    <property type="term" value="C:[Ni-Fe] hydrogenase complex"/>
    <property type="evidence" value="ECO:0007669"/>
    <property type="project" value="TreeGrafter"/>
</dbReference>
<dbReference type="GO" id="GO:0009375">
    <property type="term" value="C:ferredoxin hydrogenase complex"/>
    <property type="evidence" value="ECO:0007669"/>
    <property type="project" value="InterPro"/>
</dbReference>
<dbReference type="GO" id="GO:0005886">
    <property type="term" value="C:plasma membrane"/>
    <property type="evidence" value="ECO:0007669"/>
    <property type="project" value="UniProtKB-SubCell"/>
</dbReference>
<dbReference type="GO" id="GO:0051538">
    <property type="term" value="F:3 iron, 4 sulfur cluster binding"/>
    <property type="evidence" value="ECO:0007669"/>
    <property type="project" value="UniProtKB-KW"/>
</dbReference>
<dbReference type="GO" id="GO:0051539">
    <property type="term" value="F:4 iron, 4 sulfur cluster binding"/>
    <property type="evidence" value="ECO:0007669"/>
    <property type="project" value="UniProtKB-KW"/>
</dbReference>
<dbReference type="GO" id="GO:0009055">
    <property type="term" value="F:electron transfer activity"/>
    <property type="evidence" value="ECO:0007669"/>
    <property type="project" value="TreeGrafter"/>
</dbReference>
<dbReference type="GO" id="GO:0008901">
    <property type="term" value="F:ferredoxin hydrogenase activity"/>
    <property type="evidence" value="ECO:0007669"/>
    <property type="project" value="InterPro"/>
</dbReference>
<dbReference type="GO" id="GO:0033748">
    <property type="term" value="F:hydrogenase (acceptor) activity"/>
    <property type="evidence" value="ECO:0007669"/>
    <property type="project" value="UniProtKB-EC"/>
</dbReference>
<dbReference type="GO" id="GO:0046872">
    <property type="term" value="F:metal ion binding"/>
    <property type="evidence" value="ECO:0007669"/>
    <property type="project" value="UniProtKB-KW"/>
</dbReference>
<dbReference type="GO" id="GO:0009061">
    <property type="term" value="P:anaerobic respiration"/>
    <property type="evidence" value="ECO:0007669"/>
    <property type="project" value="TreeGrafter"/>
</dbReference>
<dbReference type="FunFam" id="3.40.50.700:FF:000002">
    <property type="entry name" value="Hydrogenase-1 small chain"/>
    <property type="match status" value="1"/>
</dbReference>
<dbReference type="FunFam" id="4.10.480.10:FF:000002">
    <property type="entry name" value="Hydrogenase-1 small chain"/>
    <property type="match status" value="1"/>
</dbReference>
<dbReference type="Gene3D" id="4.10.480.10">
    <property type="entry name" value="Cytochrome-c3 hydrogenase, C-terminal domain"/>
    <property type="match status" value="1"/>
</dbReference>
<dbReference type="Gene3D" id="3.40.50.700">
    <property type="entry name" value="NADH:ubiquinone oxidoreductase-like, 20kDa subunit"/>
    <property type="match status" value="1"/>
</dbReference>
<dbReference type="InterPro" id="IPR027394">
    <property type="entry name" value="Cytochrome-c3_hydrogenase_C"/>
</dbReference>
<dbReference type="InterPro" id="IPR006137">
    <property type="entry name" value="NADH_UbQ_OxRdtase-like_20kDa"/>
</dbReference>
<dbReference type="InterPro" id="IPR037148">
    <property type="entry name" value="NiFe-Hase_small_C_sf"/>
</dbReference>
<dbReference type="InterPro" id="IPR037024">
    <property type="entry name" value="NiFe_Hase_small_N_sf"/>
</dbReference>
<dbReference type="InterPro" id="IPR001821">
    <property type="entry name" value="NiFe_hydrogenase_ssu"/>
</dbReference>
<dbReference type="InterPro" id="IPR006311">
    <property type="entry name" value="TAT_signal"/>
</dbReference>
<dbReference type="InterPro" id="IPR019546">
    <property type="entry name" value="TAT_signal_bac_arc"/>
</dbReference>
<dbReference type="NCBIfam" id="TIGR00391">
    <property type="entry name" value="hydA"/>
    <property type="match status" value="1"/>
</dbReference>
<dbReference type="NCBIfam" id="TIGR01409">
    <property type="entry name" value="TAT_signal_seq"/>
    <property type="match status" value="1"/>
</dbReference>
<dbReference type="PANTHER" id="PTHR30013:SF6">
    <property type="entry name" value="HYDROGENASE-1 SMALL CHAIN"/>
    <property type="match status" value="1"/>
</dbReference>
<dbReference type="PANTHER" id="PTHR30013">
    <property type="entry name" value="NIFE / NIFESE HYDROGENASE SMALL SUBUNIT FAMILY MEMBER"/>
    <property type="match status" value="1"/>
</dbReference>
<dbReference type="Pfam" id="PF14720">
    <property type="entry name" value="NiFe_hyd_SSU_C"/>
    <property type="match status" value="1"/>
</dbReference>
<dbReference type="Pfam" id="PF01058">
    <property type="entry name" value="Oxidored_q6"/>
    <property type="match status" value="1"/>
</dbReference>
<dbReference type="PIRSF" id="PIRSF000310">
    <property type="entry name" value="NiFe_hyd_ssu"/>
    <property type="match status" value="1"/>
</dbReference>
<dbReference type="PRINTS" id="PR00614">
    <property type="entry name" value="NIHGNASESMLL"/>
</dbReference>
<dbReference type="SUPFAM" id="SSF56770">
    <property type="entry name" value="HydA/Nqo6-like"/>
    <property type="match status" value="1"/>
</dbReference>
<dbReference type="PROSITE" id="PS51318">
    <property type="entry name" value="TAT"/>
    <property type="match status" value="1"/>
</dbReference>
<keyword id="KW-0003">3Fe-4S</keyword>
<keyword id="KW-0004">4Fe-4S</keyword>
<keyword id="KW-0997">Cell inner membrane</keyword>
<keyword id="KW-1003">Cell membrane</keyword>
<keyword id="KW-0408">Iron</keyword>
<keyword id="KW-0411">Iron-sulfur</keyword>
<keyword id="KW-0472">Membrane</keyword>
<keyword id="KW-0479">Metal-binding</keyword>
<keyword id="KW-0560">Oxidoreductase</keyword>
<keyword id="KW-1185">Reference proteome</keyword>
<keyword id="KW-0732">Signal</keyword>
<keyword id="KW-0812">Transmembrane</keyword>
<keyword id="KW-1133">Transmembrane helix</keyword>
<sequence length="372" mass="40681">MNNEETFYQAMRRQGVTRRSFLKYCSLAATSLGLGAGMAPKIAWALENKPRIPVVWIHGLECTCCTESFIRSAHPLAKDVILSLISLDYDDTLMAAAGTQAEEVFEDIITQYNGKYILAVEGNPPLGEQGMFCISSGRPFIEKLKRAAAGASAIIAWGTCASWGCVQAARPNPTQATPIDKVITDKPIIKVPGCPPIPDVMSAIITYMVTFDRLPDVDRMGRPLMFYGQRIHDKCYRRAHFDAGEFVQSWDDDAARKGYCLYKMGCKGPTTYNACSSTRWNDGVSFPIQSGHGCLGCAENGFWDRGSFYSRVVDIPQMGTHSTADTVGLTALGVVAAAVGVHAVASAVDQRRRHNQQPTETEHQPGNEDKQA</sequence>
<gene>
    <name type="primary">hyaA</name>
    <name type="ordered locus">c1113</name>
</gene>
<accession>P69740</accession>
<accession>P19928</accession>
<proteinExistence type="inferred from homology"/>
<protein>
    <recommendedName>
        <fullName>Hydrogenase-1 small chain</fullName>
        <shortName>HYD1</shortName>
        <ecNumber>1.12.99.6</ecNumber>
    </recommendedName>
    <alternativeName>
        <fullName>Membrane-bound hydrogenase 1 small subunit</fullName>
    </alternativeName>
    <alternativeName>
        <fullName>NiFe hydrogenase</fullName>
    </alternativeName>
</protein>
<reference key="1">
    <citation type="journal article" date="2002" name="Proc. Natl. Acad. Sci. U.S.A.">
        <title>Extensive mosaic structure revealed by the complete genome sequence of uropathogenic Escherichia coli.</title>
        <authorList>
            <person name="Welch R.A."/>
            <person name="Burland V."/>
            <person name="Plunkett G. III"/>
            <person name="Redford P."/>
            <person name="Roesch P."/>
            <person name="Rasko D."/>
            <person name="Buckles E.L."/>
            <person name="Liou S.-R."/>
            <person name="Boutin A."/>
            <person name="Hackett J."/>
            <person name="Stroud D."/>
            <person name="Mayhew G.F."/>
            <person name="Rose D.J."/>
            <person name="Zhou S."/>
            <person name="Schwartz D.C."/>
            <person name="Perna N.T."/>
            <person name="Mobley H.L.T."/>
            <person name="Donnenberg M.S."/>
            <person name="Blattner F.R."/>
        </authorList>
    </citation>
    <scope>NUCLEOTIDE SEQUENCE [LARGE SCALE GENOMIC DNA]</scope>
    <source>
        <strain>CFT073 / ATCC 700928 / UPEC</strain>
    </source>
</reference>